<keyword id="KW-0479">Metal-binding</keyword>
<keyword id="KW-0520">NAD</keyword>
<keyword id="KW-0560">Oxidoreductase</keyword>
<keyword id="KW-1185">Reference proteome</keyword>
<evidence type="ECO:0000255" key="1">
    <source>
        <dbReference type="HAMAP-Rule" id="MF_01619"/>
    </source>
</evidence>
<evidence type="ECO:0000305" key="2"/>
<gene>
    <name evidence="1" type="primary">maeA</name>
    <name type="ordered locus">Z2231</name>
    <name type="ordered locus">ECs2083</name>
</gene>
<accession>Q8XAS9</accession>
<accession>Q7AE26</accession>
<comment type="catalytic activity">
    <reaction evidence="1">
        <text>(S)-malate + NAD(+) = pyruvate + CO2 + NADH</text>
        <dbReference type="Rhea" id="RHEA:12653"/>
        <dbReference type="ChEBI" id="CHEBI:15361"/>
        <dbReference type="ChEBI" id="CHEBI:15589"/>
        <dbReference type="ChEBI" id="CHEBI:16526"/>
        <dbReference type="ChEBI" id="CHEBI:57540"/>
        <dbReference type="ChEBI" id="CHEBI:57945"/>
        <dbReference type="EC" id="1.1.1.38"/>
    </reaction>
</comment>
<comment type="catalytic activity">
    <reaction evidence="1">
        <text>oxaloacetate + H(+) = pyruvate + CO2</text>
        <dbReference type="Rhea" id="RHEA:15641"/>
        <dbReference type="ChEBI" id="CHEBI:15361"/>
        <dbReference type="ChEBI" id="CHEBI:15378"/>
        <dbReference type="ChEBI" id="CHEBI:16452"/>
        <dbReference type="ChEBI" id="CHEBI:16526"/>
        <dbReference type="EC" id="1.1.1.38"/>
    </reaction>
</comment>
<comment type="cofactor">
    <cofactor evidence="1">
        <name>Mg(2+)</name>
        <dbReference type="ChEBI" id="CHEBI:18420"/>
    </cofactor>
    <cofactor evidence="1">
        <name>Mn(2+)</name>
        <dbReference type="ChEBI" id="CHEBI:29035"/>
    </cofactor>
    <text evidence="1">Divalent metal cations. Prefers magnesium or manganese.</text>
</comment>
<comment type="subunit">
    <text evidence="1">Homotetramer.</text>
</comment>
<comment type="similarity">
    <text evidence="1">Belongs to the malic enzymes family.</text>
</comment>
<comment type="sequence caution" evidence="2">
    <conflict type="erroneous initiation">
        <sequence resource="EMBL-CDS" id="AAG56290"/>
    </conflict>
</comment>
<comment type="sequence caution" evidence="2">
    <conflict type="erroneous initiation">
        <sequence resource="EMBL-CDS" id="BAB35506"/>
    </conflict>
</comment>
<proteinExistence type="inferred from homology"/>
<sequence>MEPKTKKQRSLYIPYAGPVLLEFPLLNKGSAFSMEERRNFNLLGLLPEVVETIEEQAERAWIQYQGFKTEIDKHIYLRNIQDTNETLFYRLVNNHLDEMMPVIYTPTVGAACERFSEIYRRSRGVFISYQNRHNMDDILQNVPNHNIKVIVVTDGERILGLGDQGIGGMGIPIGKLSLYTACGGISPAYTLPVVLDVGTNNQQLLNDPLYMGWRNPRITDDEYYEFVDEFIQAVKQRWPDVLLQFEDFAQKNAMPLLNRYRNEICSFNDDIQGTAAVTVGTLIAASRAAGGQLSEKKIVFLGAGSAGCGIAEMIIAQTQREGLSEEAARQKVFMVDRFGLLTDKMPNLLPFQTKLVQKRENLSDRDTDSDVLSLLDVVRNVKPDILIGVSGQTGLFTEEIIREMHKHCPRPIVMPLSNPTSRVEATPQDIIAWTEGNALVATGSPFNPVVWKDKIYPIAQCNNAFIFPGIGLGVIASGASRITDEMLMSASETLAQYSPLVLNGEGLVLPELKDIQKVSRAIAFAVGKMAQQQGVAVKTSAEALQQAIDDNFWQAEYRDYRRTSI</sequence>
<reference key="1">
    <citation type="journal article" date="2001" name="Nature">
        <title>Genome sequence of enterohaemorrhagic Escherichia coli O157:H7.</title>
        <authorList>
            <person name="Perna N.T."/>
            <person name="Plunkett G. III"/>
            <person name="Burland V."/>
            <person name="Mau B."/>
            <person name="Glasner J.D."/>
            <person name="Rose D.J."/>
            <person name="Mayhew G.F."/>
            <person name="Evans P.S."/>
            <person name="Gregor J."/>
            <person name="Kirkpatrick H.A."/>
            <person name="Posfai G."/>
            <person name="Hackett J."/>
            <person name="Klink S."/>
            <person name="Boutin A."/>
            <person name="Shao Y."/>
            <person name="Miller L."/>
            <person name="Grotbeck E.J."/>
            <person name="Davis N.W."/>
            <person name="Lim A."/>
            <person name="Dimalanta E.T."/>
            <person name="Potamousis K."/>
            <person name="Apodaca J."/>
            <person name="Anantharaman T.S."/>
            <person name="Lin J."/>
            <person name="Yen G."/>
            <person name="Schwartz D.C."/>
            <person name="Welch R.A."/>
            <person name="Blattner F.R."/>
        </authorList>
    </citation>
    <scope>NUCLEOTIDE SEQUENCE [LARGE SCALE GENOMIC DNA]</scope>
    <source>
        <strain>O157:H7 / EDL933 / ATCC 700927 / EHEC</strain>
    </source>
</reference>
<reference key="2">
    <citation type="journal article" date="2001" name="DNA Res.">
        <title>Complete genome sequence of enterohemorrhagic Escherichia coli O157:H7 and genomic comparison with a laboratory strain K-12.</title>
        <authorList>
            <person name="Hayashi T."/>
            <person name="Makino K."/>
            <person name="Ohnishi M."/>
            <person name="Kurokawa K."/>
            <person name="Ishii K."/>
            <person name="Yokoyama K."/>
            <person name="Han C.-G."/>
            <person name="Ohtsubo E."/>
            <person name="Nakayama K."/>
            <person name="Murata T."/>
            <person name="Tanaka M."/>
            <person name="Tobe T."/>
            <person name="Iida T."/>
            <person name="Takami H."/>
            <person name="Honda T."/>
            <person name="Sasakawa C."/>
            <person name="Ogasawara N."/>
            <person name="Yasunaga T."/>
            <person name="Kuhara S."/>
            <person name="Shiba T."/>
            <person name="Hattori M."/>
            <person name="Shinagawa H."/>
        </authorList>
    </citation>
    <scope>NUCLEOTIDE SEQUENCE [LARGE SCALE GENOMIC DNA]</scope>
    <source>
        <strain>O157:H7 / Sakai / RIMD 0509952 / EHEC</strain>
    </source>
</reference>
<name>MAO1_ECO57</name>
<organism>
    <name type="scientific">Escherichia coli O157:H7</name>
    <dbReference type="NCBI Taxonomy" id="83334"/>
    <lineage>
        <taxon>Bacteria</taxon>
        <taxon>Pseudomonadati</taxon>
        <taxon>Pseudomonadota</taxon>
        <taxon>Gammaproteobacteria</taxon>
        <taxon>Enterobacterales</taxon>
        <taxon>Enterobacteriaceae</taxon>
        <taxon>Escherichia</taxon>
    </lineage>
</organism>
<protein>
    <recommendedName>
        <fullName evidence="1">NAD-dependent malic enzyme</fullName>
        <shortName evidence="1">NAD-ME</shortName>
        <ecNumber evidence="1">1.1.1.38</ecNumber>
    </recommendedName>
</protein>
<feature type="chain" id="PRO_0000160216" description="NAD-dependent malic enzyme">
    <location>
        <begin position="1"/>
        <end position="565"/>
    </location>
</feature>
<feature type="active site" description="Proton donor" evidence="1">
    <location>
        <position position="104"/>
    </location>
</feature>
<feature type="active site" description="Proton acceptor" evidence="1">
    <location>
        <position position="175"/>
    </location>
</feature>
<feature type="binding site" evidence="1">
    <location>
        <position position="157"/>
    </location>
    <ligand>
        <name>NAD(+)</name>
        <dbReference type="ChEBI" id="CHEBI:57540"/>
    </ligand>
</feature>
<feature type="binding site" evidence="1">
    <location>
        <position position="246"/>
    </location>
    <ligand>
        <name>a divalent metal cation</name>
        <dbReference type="ChEBI" id="CHEBI:60240"/>
    </ligand>
</feature>
<feature type="binding site" evidence="1">
    <location>
        <position position="247"/>
    </location>
    <ligand>
        <name>a divalent metal cation</name>
        <dbReference type="ChEBI" id="CHEBI:60240"/>
    </ligand>
</feature>
<feature type="binding site" evidence="1">
    <location>
        <position position="270"/>
    </location>
    <ligand>
        <name>a divalent metal cation</name>
        <dbReference type="ChEBI" id="CHEBI:60240"/>
    </ligand>
</feature>
<feature type="binding site" evidence="1">
    <location>
        <position position="270"/>
    </location>
    <ligand>
        <name>NAD(+)</name>
        <dbReference type="ChEBI" id="CHEBI:57540"/>
    </ligand>
</feature>
<feature type="binding site" evidence="1">
    <location>
        <position position="418"/>
    </location>
    <ligand>
        <name>NAD(+)</name>
        <dbReference type="ChEBI" id="CHEBI:57540"/>
    </ligand>
</feature>
<feature type="site" description="Important for activity" evidence="1">
    <location>
        <position position="270"/>
    </location>
</feature>
<dbReference type="EC" id="1.1.1.38" evidence="1"/>
<dbReference type="EMBL" id="AE005174">
    <property type="protein sequence ID" value="AAG56290.1"/>
    <property type="status" value="ALT_INIT"/>
    <property type="molecule type" value="Genomic_DNA"/>
</dbReference>
<dbReference type="EMBL" id="BA000007">
    <property type="protein sequence ID" value="BAB35506.1"/>
    <property type="status" value="ALT_INIT"/>
    <property type="molecule type" value="Genomic_DNA"/>
</dbReference>
<dbReference type="PIR" id="C90889">
    <property type="entry name" value="C90889"/>
</dbReference>
<dbReference type="PIR" id="F85728">
    <property type="entry name" value="F85728"/>
</dbReference>
<dbReference type="RefSeq" id="NP_310110.2">
    <property type="nucleotide sequence ID" value="NC_002695.1"/>
</dbReference>
<dbReference type="RefSeq" id="WP_000433455.1">
    <property type="nucleotide sequence ID" value="NZ_VOAI01000034.1"/>
</dbReference>
<dbReference type="SMR" id="Q8XAS9"/>
<dbReference type="STRING" id="155864.Z2231"/>
<dbReference type="GeneID" id="917295"/>
<dbReference type="KEGG" id="ece:Z2231"/>
<dbReference type="KEGG" id="ecs:ECs_2083"/>
<dbReference type="PATRIC" id="fig|386585.9.peg.2188"/>
<dbReference type="eggNOG" id="COG0281">
    <property type="taxonomic scope" value="Bacteria"/>
</dbReference>
<dbReference type="HOGENOM" id="CLU_011405_5_2_6"/>
<dbReference type="OMA" id="QIVNHMV"/>
<dbReference type="Proteomes" id="UP000000558">
    <property type="component" value="Chromosome"/>
</dbReference>
<dbReference type="Proteomes" id="UP000002519">
    <property type="component" value="Chromosome"/>
</dbReference>
<dbReference type="GO" id="GO:0005829">
    <property type="term" value="C:cytosol"/>
    <property type="evidence" value="ECO:0007669"/>
    <property type="project" value="TreeGrafter"/>
</dbReference>
<dbReference type="GO" id="GO:0004471">
    <property type="term" value="F:malate dehydrogenase (decarboxylating) (NAD+) activity"/>
    <property type="evidence" value="ECO:0007669"/>
    <property type="project" value="UniProtKB-UniRule"/>
</dbReference>
<dbReference type="GO" id="GO:0046872">
    <property type="term" value="F:metal ion binding"/>
    <property type="evidence" value="ECO:0007669"/>
    <property type="project" value="UniProtKB-KW"/>
</dbReference>
<dbReference type="GO" id="GO:0051287">
    <property type="term" value="F:NAD binding"/>
    <property type="evidence" value="ECO:0007669"/>
    <property type="project" value="InterPro"/>
</dbReference>
<dbReference type="GO" id="GO:0008948">
    <property type="term" value="F:oxaloacetate decarboxylase activity"/>
    <property type="evidence" value="ECO:0007669"/>
    <property type="project" value="UniProtKB-UniRule"/>
</dbReference>
<dbReference type="GO" id="GO:0006108">
    <property type="term" value="P:malate metabolic process"/>
    <property type="evidence" value="ECO:0007669"/>
    <property type="project" value="TreeGrafter"/>
</dbReference>
<dbReference type="CDD" id="cd05312">
    <property type="entry name" value="NAD_bind_1_malic_enz"/>
    <property type="match status" value="1"/>
</dbReference>
<dbReference type="FunFam" id="3.40.50.10380:FF:000001">
    <property type="entry name" value="NAD-dependent malic enzyme"/>
    <property type="match status" value="1"/>
</dbReference>
<dbReference type="FunFam" id="3.40.50.720:FF:000055">
    <property type="entry name" value="NAD-dependent malic enzyme"/>
    <property type="match status" value="1"/>
</dbReference>
<dbReference type="Gene3D" id="3.40.50.10380">
    <property type="entry name" value="Malic enzyme, N-terminal domain"/>
    <property type="match status" value="1"/>
</dbReference>
<dbReference type="Gene3D" id="3.40.50.720">
    <property type="entry name" value="NAD(P)-binding Rossmann-like Domain"/>
    <property type="match status" value="1"/>
</dbReference>
<dbReference type="HAMAP" id="MF_01619">
    <property type="entry name" value="NAD_malic_enz"/>
    <property type="match status" value="1"/>
</dbReference>
<dbReference type="InterPro" id="IPR046346">
    <property type="entry name" value="Aminoacid_DH-like_N_sf"/>
</dbReference>
<dbReference type="InterPro" id="IPR015884">
    <property type="entry name" value="Malic_enzyme_CS"/>
</dbReference>
<dbReference type="InterPro" id="IPR012301">
    <property type="entry name" value="Malic_N_dom"/>
</dbReference>
<dbReference type="InterPro" id="IPR037062">
    <property type="entry name" value="Malic_N_dom_sf"/>
</dbReference>
<dbReference type="InterPro" id="IPR012302">
    <property type="entry name" value="Malic_NAD-bd"/>
</dbReference>
<dbReference type="InterPro" id="IPR001891">
    <property type="entry name" value="Malic_OxRdtase"/>
</dbReference>
<dbReference type="InterPro" id="IPR036291">
    <property type="entry name" value="NAD(P)-bd_dom_sf"/>
</dbReference>
<dbReference type="InterPro" id="IPR023667">
    <property type="entry name" value="NAD_malic_enz_proteobac"/>
</dbReference>
<dbReference type="NCBIfam" id="NF010052">
    <property type="entry name" value="PRK13529.1"/>
    <property type="match status" value="1"/>
</dbReference>
<dbReference type="PANTHER" id="PTHR23406">
    <property type="entry name" value="MALIC ENZYME-RELATED"/>
    <property type="match status" value="1"/>
</dbReference>
<dbReference type="PANTHER" id="PTHR23406:SF34">
    <property type="entry name" value="NAD-DEPENDENT MALIC ENZYME, MITOCHONDRIAL"/>
    <property type="match status" value="1"/>
</dbReference>
<dbReference type="Pfam" id="PF00390">
    <property type="entry name" value="malic"/>
    <property type="match status" value="1"/>
</dbReference>
<dbReference type="Pfam" id="PF03949">
    <property type="entry name" value="Malic_M"/>
    <property type="match status" value="1"/>
</dbReference>
<dbReference type="PIRSF" id="PIRSF000106">
    <property type="entry name" value="ME"/>
    <property type="match status" value="1"/>
</dbReference>
<dbReference type="PRINTS" id="PR00072">
    <property type="entry name" value="MALOXRDTASE"/>
</dbReference>
<dbReference type="SMART" id="SM01274">
    <property type="entry name" value="malic"/>
    <property type="match status" value="1"/>
</dbReference>
<dbReference type="SMART" id="SM00919">
    <property type="entry name" value="Malic_M"/>
    <property type="match status" value="1"/>
</dbReference>
<dbReference type="SUPFAM" id="SSF53223">
    <property type="entry name" value="Aminoacid dehydrogenase-like, N-terminal domain"/>
    <property type="match status" value="1"/>
</dbReference>
<dbReference type="SUPFAM" id="SSF51735">
    <property type="entry name" value="NAD(P)-binding Rossmann-fold domains"/>
    <property type="match status" value="1"/>
</dbReference>
<dbReference type="PROSITE" id="PS00331">
    <property type="entry name" value="MALIC_ENZYMES"/>
    <property type="match status" value="1"/>
</dbReference>